<organismHost>
    <name type="scientific">Equus caballus</name>
    <name type="common">Horse</name>
    <dbReference type="NCBI Taxonomy" id="9796"/>
</organismHost>
<feature type="chain" id="PRO_0000406024" description="Protein E6C">
    <location>
        <begin position="1"/>
        <end position="190"/>
    </location>
</feature>
<feature type="region of interest" description="Disordered" evidence="1">
    <location>
        <begin position="1"/>
        <end position="110"/>
    </location>
</feature>
<feature type="region of interest" description="Disordered" evidence="1">
    <location>
        <begin position="160"/>
        <end position="190"/>
    </location>
</feature>
<feature type="compositionally biased region" description="Pro residues" evidence="1">
    <location>
        <begin position="1"/>
        <end position="15"/>
    </location>
</feature>
<feature type="compositionally biased region" description="Basic residues" evidence="1">
    <location>
        <begin position="36"/>
        <end position="46"/>
    </location>
</feature>
<feature type="compositionally biased region" description="Pro residues" evidence="1">
    <location>
        <begin position="162"/>
        <end position="171"/>
    </location>
</feature>
<feature type="compositionally biased region" description="Pro residues" evidence="1">
    <location>
        <begin position="181"/>
        <end position="190"/>
    </location>
</feature>
<dbReference type="EMBL" id="U20824">
    <property type="protein sequence ID" value="AAC13802.2"/>
    <property type="molecule type" value="Genomic_DNA"/>
</dbReference>
<dbReference type="PIR" id="S55609">
    <property type="entry name" value="S55609"/>
</dbReference>
<dbReference type="KEGG" id="vg:1461055"/>
<dbReference type="Proteomes" id="UP000007083">
    <property type="component" value="Segment"/>
</dbReference>
<name>VG13_EHV2</name>
<evidence type="ECO:0000256" key="1">
    <source>
        <dbReference type="SAM" id="MobiDB-lite"/>
    </source>
</evidence>
<organism>
    <name type="scientific">Equine herpesvirus 2 (strain 86/87)</name>
    <name type="common">EHV-2</name>
    <dbReference type="NCBI Taxonomy" id="82831"/>
    <lineage>
        <taxon>Viruses</taxon>
        <taxon>Duplodnaviria</taxon>
        <taxon>Heunggongvirae</taxon>
        <taxon>Peploviricota</taxon>
        <taxon>Herviviricetes</taxon>
        <taxon>Herpesvirales</taxon>
        <taxon>Orthoherpesviridae</taxon>
        <taxon>Gammaherpesvirinae</taxon>
        <taxon>Percavirus</taxon>
        <taxon>Percavirus equidgamma2</taxon>
        <taxon>Equid gammaherpesvirus 2</taxon>
    </lineage>
</organism>
<reference key="1">
    <citation type="journal article" date="1995" name="J. Mol. Biol.">
        <title>The DNA sequence of equine herpesvirus 2.</title>
        <authorList>
            <person name="Telford E.A.R."/>
            <person name="Watson M.S."/>
            <person name="Aird H.C."/>
            <person name="Perry J."/>
            <person name="Davison A.J."/>
        </authorList>
    </citation>
    <scope>NUCLEOTIDE SEQUENCE [LARGE SCALE GENOMIC DNA]</scope>
</reference>
<reference key="2">
    <citation type="submission" date="2015-01" db="EMBL/GenBank/DDBJ databases">
        <authorList>
            <person name="Davison A.J."/>
        </authorList>
    </citation>
    <scope>SEQUENCE REVISION</scope>
</reference>
<keyword id="KW-1185">Reference proteome</keyword>
<protein>
    <recommendedName>
        <fullName>Protein E6C</fullName>
    </recommendedName>
</protein>
<sequence>MFGVAKPPPSPIPKPPRGRHFGEKYPESVNFPSRGARQRASTRHRPSIKEVWEPPAPPGAGMIFWGENGENGDFGQSAPSCYERRRARSQGGQGAENAAPVLRPGPEGRRRRESLIFLEGDMVRETATVAPWTVSPLRPERPKSLLGRFRSRLTVWREVPRTPGPVAPIPELPGEADDPPTRTPPPPPDD</sequence>
<gene>
    <name type="primary">13</name>
</gene>
<proteinExistence type="predicted"/>
<accession>Q66619</accession>